<feature type="chain" id="PRO_0000148304" description="Putative transport protein aq_740">
    <location>
        <begin position="1"/>
        <end position="353"/>
    </location>
</feature>
<feature type="transmembrane region" description="Helical" evidence="1">
    <location>
        <begin position="4"/>
        <end position="24"/>
    </location>
</feature>
<feature type="transmembrane region" description="Helical" evidence="1">
    <location>
        <begin position="28"/>
        <end position="48"/>
    </location>
</feature>
<feature type="transmembrane region" description="Helical" evidence="1">
    <location>
        <begin position="60"/>
        <end position="80"/>
    </location>
</feature>
<feature type="transmembrane region" description="Helical" evidence="1">
    <location>
        <begin position="156"/>
        <end position="176"/>
    </location>
</feature>
<feature type="transmembrane region" description="Helical" evidence="1">
    <location>
        <begin position="209"/>
        <end position="229"/>
    </location>
</feature>
<feature type="transmembrane region" description="Helical" evidence="1">
    <location>
        <begin position="240"/>
        <end position="260"/>
    </location>
</feature>
<feature type="transmembrane region" description="Helical" evidence="1">
    <location>
        <begin position="268"/>
        <end position="288"/>
    </location>
</feature>
<feature type="transmembrane region" description="Helical" evidence="1">
    <location>
        <begin position="309"/>
        <end position="329"/>
    </location>
</feature>
<sequence>MNKLSLFVYLFFFLSFLFLFLYLLQPFFNPIVWAIVFGIVLYPLYGFIKRKLKSENLAAFLVIFIVLVAIVIPFTIFAVITAQQIIVFSIKVVNFVQTHSVNDLINSLKEIPFLKEKRESLEPLLNYLQSEEFRRALINALNSILTFVGDRLRSYVYTAGTSLFHVFVFLLTLFFILRDGEKVLKEIINSIPMKREDLEEILKTIYRTVLAVIYGTVGTAVAQSIMGFIGYSLAGVEFALIWALITFFAAFVPPFGAAFVWVPMDIYLFTTKGIKEGLILLFFGTFLISTMDNIVRPLVMKQGIKLPYVALFFSTIGGLIKFGFIGVFLGPIILSTMLASVKIYRRRVIHSGI</sequence>
<name>Y740_AQUAE</name>
<accession>O66948</accession>
<organism>
    <name type="scientific">Aquifex aeolicus (strain VF5)</name>
    <dbReference type="NCBI Taxonomy" id="224324"/>
    <lineage>
        <taxon>Bacteria</taxon>
        <taxon>Pseudomonadati</taxon>
        <taxon>Aquificota</taxon>
        <taxon>Aquificia</taxon>
        <taxon>Aquificales</taxon>
        <taxon>Aquificaceae</taxon>
        <taxon>Aquifex</taxon>
    </lineage>
</organism>
<protein>
    <recommendedName>
        <fullName>Putative transport protein aq_740</fullName>
    </recommendedName>
</protein>
<comment type="subcellular location">
    <subcellularLocation>
        <location evidence="2">Cell membrane</location>
        <topology evidence="2">Multi-pass membrane protein</topology>
    </subcellularLocation>
</comment>
<comment type="similarity">
    <text evidence="2">Belongs to the autoinducer-2 exporter (AI-2E) (TC 2.A.86) family.</text>
</comment>
<reference key="1">
    <citation type="journal article" date="1998" name="Nature">
        <title>The complete genome of the hyperthermophilic bacterium Aquifex aeolicus.</title>
        <authorList>
            <person name="Deckert G."/>
            <person name="Warren P.V."/>
            <person name="Gaasterland T."/>
            <person name="Young W.G."/>
            <person name="Lenox A.L."/>
            <person name="Graham D.E."/>
            <person name="Overbeek R."/>
            <person name="Snead M.A."/>
            <person name="Keller M."/>
            <person name="Aujay M."/>
            <person name="Huber R."/>
            <person name="Feldman R.A."/>
            <person name="Short J.M."/>
            <person name="Olsen G.J."/>
            <person name="Swanson R.V."/>
        </authorList>
    </citation>
    <scope>NUCLEOTIDE SEQUENCE [LARGE SCALE GENOMIC DNA]</scope>
    <source>
        <strain>VF5</strain>
    </source>
</reference>
<evidence type="ECO:0000255" key="1"/>
<evidence type="ECO:0000305" key="2"/>
<proteinExistence type="inferred from homology"/>
<dbReference type="EMBL" id="AE000657">
    <property type="protein sequence ID" value="AAC06916.1"/>
    <property type="molecule type" value="Genomic_DNA"/>
</dbReference>
<dbReference type="PIR" id="A70365">
    <property type="entry name" value="A70365"/>
</dbReference>
<dbReference type="RefSeq" id="NP_213509.1">
    <property type="nucleotide sequence ID" value="NC_000918.1"/>
</dbReference>
<dbReference type="RefSeq" id="WP_010880447.1">
    <property type="nucleotide sequence ID" value="NC_000918.1"/>
</dbReference>
<dbReference type="SMR" id="O66948"/>
<dbReference type="FunCoup" id="O66948">
    <property type="interactions" value="222"/>
</dbReference>
<dbReference type="STRING" id="224324.aq_740"/>
<dbReference type="EnsemblBacteria" id="AAC06916">
    <property type="protein sequence ID" value="AAC06916"/>
    <property type="gene ID" value="aq_740"/>
</dbReference>
<dbReference type="KEGG" id="aae:aq_740"/>
<dbReference type="eggNOG" id="COG0628">
    <property type="taxonomic scope" value="Bacteria"/>
</dbReference>
<dbReference type="HOGENOM" id="CLU_041771_2_1_0"/>
<dbReference type="InParanoid" id="O66948"/>
<dbReference type="OrthoDB" id="106838at2"/>
<dbReference type="Proteomes" id="UP000000798">
    <property type="component" value="Chromosome"/>
</dbReference>
<dbReference type="GO" id="GO:0005886">
    <property type="term" value="C:plasma membrane"/>
    <property type="evidence" value="ECO:0007669"/>
    <property type="project" value="UniProtKB-SubCell"/>
</dbReference>
<dbReference type="InterPro" id="IPR002549">
    <property type="entry name" value="AI-2E-like"/>
</dbReference>
<dbReference type="PANTHER" id="PTHR21716">
    <property type="entry name" value="TRANSMEMBRANE PROTEIN"/>
    <property type="match status" value="1"/>
</dbReference>
<dbReference type="PANTHER" id="PTHR21716:SF4">
    <property type="entry name" value="TRANSMEMBRANE PROTEIN 245"/>
    <property type="match status" value="1"/>
</dbReference>
<dbReference type="Pfam" id="PF01594">
    <property type="entry name" value="AI-2E_transport"/>
    <property type="match status" value="1"/>
</dbReference>
<gene>
    <name type="ordered locus">aq_740</name>
</gene>
<keyword id="KW-1003">Cell membrane</keyword>
<keyword id="KW-0472">Membrane</keyword>
<keyword id="KW-1185">Reference proteome</keyword>
<keyword id="KW-0812">Transmembrane</keyword>
<keyword id="KW-1133">Transmembrane helix</keyword>
<keyword id="KW-0813">Transport</keyword>